<proteinExistence type="inferred from homology"/>
<protein>
    <recommendedName>
        <fullName>Homeobox protein Hox-B1b</fullName>
    </recommendedName>
</protein>
<organism>
    <name type="scientific">Takifugu rubripes</name>
    <name type="common">Japanese pufferfish</name>
    <name type="synonym">Fugu rubripes</name>
    <dbReference type="NCBI Taxonomy" id="31033"/>
    <lineage>
        <taxon>Eukaryota</taxon>
        <taxon>Metazoa</taxon>
        <taxon>Chordata</taxon>
        <taxon>Craniata</taxon>
        <taxon>Vertebrata</taxon>
        <taxon>Euteleostomi</taxon>
        <taxon>Actinopterygii</taxon>
        <taxon>Neopterygii</taxon>
        <taxon>Teleostei</taxon>
        <taxon>Neoteleostei</taxon>
        <taxon>Acanthomorphata</taxon>
        <taxon>Eupercaria</taxon>
        <taxon>Tetraodontiformes</taxon>
        <taxon>Tetradontoidea</taxon>
        <taxon>Tetraodontidae</taxon>
        <taxon>Takifugu</taxon>
    </lineage>
</organism>
<name>HXB1B_TAKRU</name>
<evidence type="ECO:0000250" key="1"/>
<evidence type="ECO:0000255" key="2">
    <source>
        <dbReference type="PROSITE-ProRule" id="PRU00108"/>
    </source>
</evidence>
<evidence type="ECO:0000256" key="3">
    <source>
        <dbReference type="SAM" id="MobiDB-lite"/>
    </source>
</evidence>
<evidence type="ECO:0000305" key="4"/>
<reference key="1">
    <citation type="journal article" date="2006" name="Proc. Natl. Acad. Sci. U.S.A.">
        <title>Highly conserved syntenic blocks at the vertebrate Hox loci and conserved regulatory elements within and outside Hox gene clusters.</title>
        <authorList>
            <person name="Lee A.P."/>
            <person name="Koh E.G.L."/>
            <person name="Tay A."/>
            <person name="Brenner S."/>
            <person name="Venkatesh B."/>
        </authorList>
    </citation>
    <scope>NUCLEOTIDE SEQUENCE [GENOMIC DNA]</scope>
</reference>
<comment type="function">
    <text evidence="1">Sequence-specific transcription factor which is part of a developmental regulatory system that provides cells with specific positional identities on the anterior-posterior axis.</text>
</comment>
<comment type="subcellular location">
    <subcellularLocation>
        <location evidence="2">Nucleus</location>
    </subcellularLocation>
</comment>
<comment type="similarity">
    <text evidence="4">Belongs to the Antp homeobox family. Labial subfamily.</text>
</comment>
<keyword id="KW-0217">Developmental protein</keyword>
<keyword id="KW-0238">DNA-binding</keyword>
<keyword id="KW-0371">Homeobox</keyword>
<keyword id="KW-0539">Nucleus</keyword>
<keyword id="KW-1185">Reference proteome</keyword>
<keyword id="KW-0804">Transcription</keyword>
<keyword id="KW-0805">Transcription regulation</keyword>
<gene>
    <name type="primary">hoxb1b</name>
</gene>
<sequence length="280" mass="31221">MSSYLDYPVCNRGTNIFSAKPGYHNLNHGYLSSNSCATSDSYAPDGRLAAPTSAPHQSPGLPLHHQTHLDLPFAATGNSVYGSHLDYGHHQYGLAPEQDRSYVHPQVSPLGTNMAPYTGDSCGPAAANGSQYLHFGNGEQRLQEYPDNVYARLPPQSKKESEHVEETCKTFDWMKVKRNPPKTGGASEFGVPGQHNVIRTNFTTKQLTELEKEFHFNKYLTRARRVEVAASLELNETQVKIWFQNRRMKQKKREKLGGVLVHREKASGPESSPKAKESEP</sequence>
<feature type="chain" id="PRO_0000265976" description="Homeobox protein Hox-B1b">
    <location>
        <begin position="1"/>
        <end position="280"/>
    </location>
</feature>
<feature type="DNA-binding region" description="Homeobox" evidence="2">
    <location>
        <begin position="195"/>
        <end position="254"/>
    </location>
</feature>
<feature type="region of interest" description="Disordered" evidence="3">
    <location>
        <begin position="46"/>
        <end position="65"/>
    </location>
</feature>
<feature type="region of interest" description="Disordered" evidence="3">
    <location>
        <begin position="249"/>
        <end position="280"/>
    </location>
</feature>
<feature type="short sequence motif" description="Antp-type hexapeptide">
    <location>
        <begin position="170"/>
        <end position="175"/>
    </location>
</feature>
<feature type="compositionally biased region" description="Basic and acidic residues" evidence="3">
    <location>
        <begin position="261"/>
        <end position="280"/>
    </location>
</feature>
<dbReference type="EMBL" id="DQ481666">
    <property type="protein sequence ID" value="ABF22426.1"/>
    <property type="molecule type" value="Genomic_DNA"/>
</dbReference>
<dbReference type="SMR" id="Q1KKW8"/>
<dbReference type="FunCoup" id="Q1KKW8">
    <property type="interactions" value="2"/>
</dbReference>
<dbReference type="STRING" id="31033.ENSTRUP00000030508"/>
<dbReference type="eggNOG" id="KOG0489">
    <property type="taxonomic scope" value="Eukaryota"/>
</dbReference>
<dbReference type="InParanoid" id="Q1KKW8"/>
<dbReference type="Proteomes" id="UP000005226">
    <property type="component" value="Unplaced"/>
</dbReference>
<dbReference type="GO" id="GO:0005634">
    <property type="term" value="C:nucleus"/>
    <property type="evidence" value="ECO:0007669"/>
    <property type="project" value="UniProtKB-SubCell"/>
</dbReference>
<dbReference type="GO" id="GO:0000981">
    <property type="term" value="F:DNA-binding transcription factor activity, RNA polymerase II-specific"/>
    <property type="evidence" value="ECO:0007669"/>
    <property type="project" value="InterPro"/>
</dbReference>
<dbReference type="GO" id="GO:0000978">
    <property type="term" value="F:RNA polymerase II cis-regulatory region sequence-specific DNA binding"/>
    <property type="evidence" value="ECO:0007669"/>
    <property type="project" value="TreeGrafter"/>
</dbReference>
<dbReference type="CDD" id="cd00086">
    <property type="entry name" value="homeodomain"/>
    <property type="match status" value="1"/>
</dbReference>
<dbReference type="FunFam" id="1.10.10.60:FF:000113">
    <property type="entry name" value="homeobox protein Hox-B1"/>
    <property type="match status" value="1"/>
</dbReference>
<dbReference type="Gene3D" id="1.10.10.60">
    <property type="entry name" value="Homeodomain-like"/>
    <property type="match status" value="1"/>
</dbReference>
<dbReference type="InterPro" id="IPR001356">
    <property type="entry name" value="HD"/>
</dbReference>
<dbReference type="InterPro" id="IPR020479">
    <property type="entry name" value="HD_metazoa"/>
</dbReference>
<dbReference type="InterPro" id="IPR017970">
    <property type="entry name" value="Homeobox_CS"/>
</dbReference>
<dbReference type="InterPro" id="IPR009057">
    <property type="entry name" value="Homeodomain-like_sf"/>
</dbReference>
<dbReference type="InterPro" id="IPR046327">
    <property type="entry name" value="HXA1/B1/D1"/>
</dbReference>
<dbReference type="PANTHER" id="PTHR45946:SF5">
    <property type="entry name" value="HOMEOBOX PROTEIN HOX-B1"/>
    <property type="match status" value="1"/>
</dbReference>
<dbReference type="PANTHER" id="PTHR45946">
    <property type="entry name" value="HOMEOBOX PROTEIN ROUGH-RELATED"/>
    <property type="match status" value="1"/>
</dbReference>
<dbReference type="Pfam" id="PF00046">
    <property type="entry name" value="Homeodomain"/>
    <property type="match status" value="1"/>
</dbReference>
<dbReference type="PRINTS" id="PR00024">
    <property type="entry name" value="HOMEOBOX"/>
</dbReference>
<dbReference type="SMART" id="SM00389">
    <property type="entry name" value="HOX"/>
    <property type="match status" value="1"/>
</dbReference>
<dbReference type="SUPFAM" id="SSF46689">
    <property type="entry name" value="Homeodomain-like"/>
    <property type="match status" value="1"/>
</dbReference>
<dbReference type="PROSITE" id="PS00027">
    <property type="entry name" value="HOMEOBOX_1"/>
    <property type="match status" value="1"/>
</dbReference>
<dbReference type="PROSITE" id="PS50071">
    <property type="entry name" value="HOMEOBOX_2"/>
    <property type="match status" value="1"/>
</dbReference>
<accession>Q1KKW8</accession>